<name>RL16A_CANAL</name>
<accession>Q5AB87</accession>
<gene>
    <name evidence="2" type="primary">RPL16A</name>
    <name type="synonym">RPL16</name>
    <name type="ordered locus">orf19.6085</name>
    <name type="ORF">CAALFM_C100180WA</name>
</gene>
<reference key="1">
    <citation type="journal article" date="2004" name="Proc. Natl. Acad. Sci. U.S.A.">
        <title>The diploid genome sequence of Candida albicans.</title>
        <authorList>
            <person name="Jones T."/>
            <person name="Federspiel N.A."/>
            <person name="Chibana H."/>
            <person name="Dungan J."/>
            <person name="Kalman S."/>
            <person name="Magee B.B."/>
            <person name="Newport G."/>
            <person name="Thorstenson Y.R."/>
            <person name="Agabian N."/>
            <person name="Magee P.T."/>
            <person name="Davis R.W."/>
            <person name="Scherer S."/>
        </authorList>
    </citation>
    <scope>NUCLEOTIDE SEQUENCE [LARGE SCALE GENOMIC DNA]</scope>
    <source>
        <strain>SC5314 / ATCC MYA-2876</strain>
    </source>
</reference>
<reference key="2">
    <citation type="journal article" date="2007" name="Genome Biol.">
        <title>Assembly of the Candida albicans genome into sixteen supercontigs aligned on the eight chromosomes.</title>
        <authorList>
            <person name="van het Hoog M."/>
            <person name="Rast T.J."/>
            <person name="Martchenko M."/>
            <person name="Grindle S."/>
            <person name="Dignard D."/>
            <person name="Hogues H."/>
            <person name="Cuomo C."/>
            <person name="Berriman M."/>
            <person name="Scherer S."/>
            <person name="Magee B.B."/>
            <person name="Whiteway M."/>
            <person name="Chibana H."/>
            <person name="Nantel A."/>
            <person name="Magee P.T."/>
        </authorList>
    </citation>
    <scope>GENOME REANNOTATION</scope>
    <source>
        <strain>SC5314 / ATCC MYA-2876</strain>
    </source>
</reference>
<reference key="3">
    <citation type="journal article" date="2013" name="Genome Biol.">
        <title>Assembly of a phased diploid Candida albicans genome facilitates allele-specific measurements and provides a simple model for repeat and indel structure.</title>
        <authorList>
            <person name="Muzzey D."/>
            <person name="Schwartz K."/>
            <person name="Weissman J.S."/>
            <person name="Sherlock G."/>
        </authorList>
    </citation>
    <scope>NUCLEOTIDE SEQUENCE [LARGE SCALE GENOMIC DNA]</scope>
    <scope>GENOME REANNOTATION</scope>
    <source>
        <strain>SC5314 / ATCC MYA-2876</strain>
    </source>
</reference>
<reference evidence="5 6 7" key="4">
    <citation type="journal article" date="2022" name="Sci. Adv.">
        <title>E-site drug specificity of the human pathogen Candida albicans ribosome.</title>
        <authorList>
            <person name="Zgadzay Y."/>
            <person name="Kolosova O."/>
            <person name="Stetsenko A."/>
            <person name="Wu C."/>
            <person name="Bruchlen D."/>
            <person name="Usachev K."/>
            <person name="Validov S."/>
            <person name="Jenner L."/>
            <person name="Rogachev A."/>
            <person name="Yusupova G."/>
            <person name="Sachs M.S."/>
            <person name="Guskov A."/>
            <person name="Yusupov M."/>
        </authorList>
    </citation>
    <scope>STRUCTURE BY ELECTRON MICROSCOPY (2.32 ANGSTROMS) OF THE 80S RIBOSOME</scope>
    <scope>SUBUNIT</scope>
</reference>
<dbReference type="EMBL" id="CP017623">
    <property type="protein sequence ID" value="AOW25720.1"/>
    <property type="molecule type" value="Genomic_DNA"/>
</dbReference>
<dbReference type="RefSeq" id="XP_719047.1">
    <property type="nucleotide sequence ID" value="XM_713954.1"/>
</dbReference>
<dbReference type="PDB" id="7PZY">
    <property type="method" value="EM"/>
    <property type="resolution" value="2.32 A"/>
    <property type="chains" value="w=1-200"/>
</dbReference>
<dbReference type="PDB" id="7Q08">
    <property type="method" value="EM"/>
    <property type="resolution" value="2.56 A"/>
    <property type="chains" value="w=1-200"/>
</dbReference>
<dbReference type="PDB" id="7Q0F">
    <property type="method" value="EM"/>
    <property type="resolution" value="2.64 A"/>
    <property type="chains" value="w=1-200"/>
</dbReference>
<dbReference type="PDB" id="7Q0P">
    <property type="method" value="EM"/>
    <property type="resolution" value="2.77 A"/>
    <property type="chains" value="w=1-200"/>
</dbReference>
<dbReference type="PDB" id="7Q0R">
    <property type="method" value="EM"/>
    <property type="resolution" value="2.67 A"/>
    <property type="chains" value="w=1-200"/>
</dbReference>
<dbReference type="PDB" id="8C3A">
    <property type="method" value="X-ray"/>
    <property type="resolution" value="3.00 A"/>
    <property type="chains" value="BJ/w=1-200"/>
</dbReference>
<dbReference type="PDB" id="8OGJ">
    <property type="method" value="EM"/>
    <property type="resolution" value="3.10 A"/>
    <property type="chains" value="w=1-200"/>
</dbReference>
<dbReference type="PDB" id="8OH6">
    <property type="method" value="X-ray"/>
    <property type="resolution" value="3.35 A"/>
    <property type="chains" value="BJ/w=1-200"/>
</dbReference>
<dbReference type="PDB" id="8OI5">
    <property type="method" value="X-ray"/>
    <property type="resolution" value="2.90 A"/>
    <property type="chains" value="BJ/w=1-200"/>
</dbReference>
<dbReference type="PDB" id="8OJ3">
    <property type="method" value="X-ray"/>
    <property type="resolution" value="3.50 A"/>
    <property type="chains" value="BJ/w=1-200"/>
</dbReference>
<dbReference type="PDBsum" id="7PZY"/>
<dbReference type="PDBsum" id="7Q08"/>
<dbReference type="PDBsum" id="7Q0F"/>
<dbReference type="PDBsum" id="7Q0P"/>
<dbReference type="PDBsum" id="7Q0R"/>
<dbReference type="PDBsum" id="8C3A"/>
<dbReference type="PDBsum" id="8OGJ"/>
<dbReference type="PDBsum" id="8OH6"/>
<dbReference type="PDBsum" id="8OI5"/>
<dbReference type="PDBsum" id="8OJ3"/>
<dbReference type="SMR" id="Q5AB87"/>
<dbReference type="FunCoup" id="Q5AB87">
    <property type="interactions" value="1089"/>
</dbReference>
<dbReference type="STRING" id="237561.Q5AB87"/>
<dbReference type="EnsemblFungi" id="C1_00180W_A-T">
    <property type="protein sequence ID" value="C1_00180W_A-T-p1"/>
    <property type="gene ID" value="C1_00180W_A"/>
</dbReference>
<dbReference type="GeneID" id="3639338"/>
<dbReference type="KEGG" id="cal:CAALFM_C100180WA"/>
<dbReference type="CGD" id="CAL0000175593">
    <property type="gene designation" value="RPL16A"/>
</dbReference>
<dbReference type="VEuPathDB" id="FungiDB:C1_00180W_A"/>
<dbReference type="eggNOG" id="KOG3204">
    <property type="taxonomic scope" value="Eukaryota"/>
</dbReference>
<dbReference type="HOGENOM" id="CLU_076922_0_0_1"/>
<dbReference type="InParanoid" id="Q5AB87"/>
<dbReference type="OMA" id="TRFNKTH"/>
<dbReference type="OrthoDB" id="1882297at2759"/>
<dbReference type="Proteomes" id="UP000000559">
    <property type="component" value="Chromosome 1"/>
</dbReference>
<dbReference type="GO" id="GO:0022625">
    <property type="term" value="C:cytosolic large ribosomal subunit"/>
    <property type="evidence" value="ECO:0000318"/>
    <property type="project" value="GO_Central"/>
</dbReference>
<dbReference type="GO" id="GO:0016020">
    <property type="term" value="C:membrane"/>
    <property type="evidence" value="ECO:0000314"/>
    <property type="project" value="CGD"/>
</dbReference>
<dbReference type="GO" id="GO:0005840">
    <property type="term" value="C:ribosome"/>
    <property type="evidence" value="ECO:0000318"/>
    <property type="project" value="GO_Central"/>
</dbReference>
<dbReference type="GO" id="GO:0032040">
    <property type="term" value="C:small-subunit processome"/>
    <property type="evidence" value="ECO:0000314"/>
    <property type="project" value="CGD"/>
</dbReference>
<dbReference type="GO" id="GO:0003729">
    <property type="term" value="F:mRNA binding"/>
    <property type="evidence" value="ECO:0000318"/>
    <property type="project" value="GO_Central"/>
</dbReference>
<dbReference type="GO" id="GO:0003735">
    <property type="term" value="F:structural constituent of ribosome"/>
    <property type="evidence" value="ECO:0000318"/>
    <property type="project" value="GO_Central"/>
</dbReference>
<dbReference type="GO" id="GO:0009267">
    <property type="term" value="P:cellular response to starvation"/>
    <property type="evidence" value="ECO:0000315"/>
    <property type="project" value="CGD"/>
</dbReference>
<dbReference type="GO" id="GO:0030447">
    <property type="term" value="P:filamentous growth"/>
    <property type="evidence" value="ECO:0000315"/>
    <property type="project" value="CGD"/>
</dbReference>
<dbReference type="GO" id="GO:0036180">
    <property type="term" value="P:filamentous growth of a population of unicellular organisms in response to biotic stimulus"/>
    <property type="evidence" value="ECO:0000315"/>
    <property type="project" value="CGD"/>
</dbReference>
<dbReference type="GO" id="GO:0036170">
    <property type="term" value="P:filamentous growth of a population of unicellular organisms in response to starvation"/>
    <property type="evidence" value="ECO:0000315"/>
    <property type="project" value="CGD"/>
</dbReference>
<dbReference type="GO" id="GO:0017148">
    <property type="term" value="P:negative regulation of translation"/>
    <property type="evidence" value="ECO:0000318"/>
    <property type="project" value="GO_Central"/>
</dbReference>
<dbReference type="GO" id="GO:0006412">
    <property type="term" value="P:translation"/>
    <property type="evidence" value="ECO:0007669"/>
    <property type="project" value="InterPro"/>
</dbReference>
<dbReference type="CDD" id="cd00392">
    <property type="entry name" value="Ribosomal_L13"/>
    <property type="match status" value="1"/>
</dbReference>
<dbReference type="FunFam" id="3.90.1180.10:FF:000002">
    <property type="entry name" value="60S ribosomal protein L16"/>
    <property type="match status" value="1"/>
</dbReference>
<dbReference type="FunFam" id="1.20.5.4280:FF:000001">
    <property type="entry name" value="60S ribosomal protein L16-A"/>
    <property type="match status" value="1"/>
</dbReference>
<dbReference type="Gene3D" id="1.20.5.4280">
    <property type="match status" value="1"/>
</dbReference>
<dbReference type="Gene3D" id="3.90.1180.10">
    <property type="entry name" value="Ribosomal protein L13"/>
    <property type="match status" value="1"/>
</dbReference>
<dbReference type="HAMAP" id="MF_01366">
    <property type="entry name" value="Ribosomal_uL13"/>
    <property type="match status" value="1"/>
</dbReference>
<dbReference type="InterPro" id="IPR005822">
    <property type="entry name" value="Ribosomal_uL13"/>
</dbReference>
<dbReference type="InterPro" id="IPR023563">
    <property type="entry name" value="Ribosomal_uL13_CS"/>
</dbReference>
<dbReference type="InterPro" id="IPR005755">
    <property type="entry name" value="Ribosomal_uL13_euk/arc"/>
</dbReference>
<dbReference type="InterPro" id="IPR036899">
    <property type="entry name" value="Ribosomal_uL13_sf"/>
</dbReference>
<dbReference type="NCBIfam" id="TIGR01077">
    <property type="entry name" value="L13_A_E"/>
    <property type="match status" value="1"/>
</dbReference>
<dbReference type="PANTHER" id="PTHR11545:SF3">
    <property type="entry name" value="LARGE RIBOSOMAL SUBUNIT PROTEIN UL13"/>
    <property type="match status" value="1"/>
</dbReference>
<dbReference type="PANTHER" id="PTHR11545">
    <property type="entry name" value="RIBOSOMAL PROTEIN L13"/>
    <property type="match status" value="1"/>
</dbReference>
<dbReference type="Pfam" id="PF00572">
    <property type="entry name" value="Ribosomal_L13"/>
    <property type="match status" value="1"/>
</dbReference>
<dbReference type="SUPFAM" id="SSF52161">
    <property type="entry name" value="Ribosomal protein L13"/>
    <property type="match status" value="1"/>
</dbReference>
<dbReference type="PROSITE" id="PS00783">
    <property type="entry name" value="RIBOSOMAL_L13"/>
    <property type="match status" value="1"/>
</dbReference>
<proteinExistence type="evidence at protein level"/>
<sequence>MSSFEKVVVIDGKGHLLGRLASIVSKQILNGQKVVVVRCEELNISGEFFRNKLKYHDYLRKATRYNKKKGPFHFRAPSRILYKAIRGMIPHKTARGKAALERLKVFEGVPPPYDKKKRVVVPQALRVLRLKPGRKYTTVGKLSSAVGWKYESVVEKLEEKRKVQSAEYYAKKKALTKKLNAAKASTAESEAAQKLAAFGY</sequence>
<organism>
    <name type="scientific">Candida albicans (strain SC5314 / ATCC MYA-2876)</name>
    <name type="common">Yeast</name>
    <dbReference type="NCBI Taxonomy" id="237561"/>
    <lineage>
        <taxon>Eukaryota</taxon>
        <taxon>Fungi</taxon>
        <taxon>Dikarya</taxon>
        <taxon>Ascomycota</taxon>
        <taxon>Saccharomycotina</taxon>
        <taxon>Pichiomycetes</taxon>
        <taxon>Debaryomycetaceae</taxon>
        <taxon>Candida/Lodderomyces clade</taxon>
        <taxon>Candida</taxon>
    </lineage>
</organism>
<feature type="chain" id="PRO_0000456527" description="Large ribosomal subunit protein uL13">
    <location>
        <begin position="1"/>
        <end position="200"/>
    </location>
</feature>
<keyword id="KW-0002">3D-structure</keyword>
<keyword id="KW-0963">Cytoplasm</keyword>
<keyword id="KW-1185">Reference proteome</keyword>
<keyword id="KW-0687">Ribonucleoprotein</keyword>
<keyword id="KW-0689">Ribosomal protein</keyword>
<protein>
    <recommendedName>
        <fullName evidence="2">Large ribosomal subunit protein uL13</fullName>
    </recommendedName>
    <alternativeName>
        <fullName>60S ribosomal protein L16-A</fullName>
    </alternativeName>
</protein>
<evidence type="ECO:0000269" key="1">
    <source>
    </source>
</evidence>
<evidence type="ECO:0000303" key="2">
    <source>
    </source>
</evidence>
<evidence type="ECO:0000305" key="3"/>
<evidence type="ECO:0000305" key="4">
    <source>
    </source>
</evidence>
<evidence type="ECO:0007744" key="5">
    <source>
        <dbReference type="PDB" id="7PZY"/>
    </source>
</evidence>
<evidence type="ECO:0007744" key="6">
    <source>
        <dbReference type="PDB" id="7Q0F"/>
    </source>
</evidence>
<evidence type="ECO:0007744" key="7">
    <source>
        <dbReference type="PDB" id="7Q0P"/>
    </source>
</evidence>
<comment type="function">
    <text evidence="4">Component of the ribosome, a large ribonucleoprotein complex responsible for the synthesis of proteins in the cell. The small ribosomal subunit (SSU) binds messenger RNAs (mRNAs) and translates the encoded message by selecting cognate aminoacyl-transfer RNA (tRNA) molecules. The large subunit (LSU) contains the ribosomal catalytic site termed the peptidyl transferase center (PTC), which catalyzes the formation of peptide bonds, thereby polymerizing the amino acids delivered by tRNAs into a polypeptide chain. The nascent polypeptides leave the ribosome through a tunnel in the LSU and interact with protein factors that function in enzymatic processing, targeting, and the membrane insertion of nascent chains at the exit of the ribosomal tunnel.</text>
</comment>
<comment type="subunit">
    <text evidence="1">Component of the large ribosomal subunit (PubMed:35613268). Mature ribosomes consist of a small (40S) and a large (60S) subunit (PubMed:35613268). The 40S subunit contains about 32 different proteins and 1 molecule of RNA (18S) (PubMed:35613268). The 60S subunit contains 45 different proteins and 3 molecules of RNA (25S, 5.8S and 5S) (PubMed:35613268).</text>
</comment>
<comment type="subcellular location">
    <subcellularLocation>
        <location evidence="4">Cytoplasm</location>
    </subcellularLocation>
</comment>
<comment type="similarity">
    <text evidence="3">Belongs to the universal ribosomal protein uL13 family.</text>
</comment>